<comment type="catalytic activity">
    <reaction>
        <text>an [RNA] containing cytidine + H2O = an [RNA]-3'-cytidine-3'-phosphate + a 5'-hydroxy-ribonucleotide-3'-[RNA].</text>
        <dbReference type="EC" id="4.6.1.18"/>
    </reaction>
</comment>
<comment type="catalytic activity">
    <reaction>
        <text>an [RNA] containing uridine + H2O = an [RNA]-3'-uridine-3'-phosphate + a 5'-hydroxy-ribonucleotide-3'-[RNA].</text>
        <dbReference type="EC" id="4.6.1.18"/>
    </reaction>
</comment>
<comment type="subcellular location">
    <subcellularLocation>
        <location>Secreted</location>
    </subcellularLocation>
</comment>
<comment type="tissue specificity">
    <text>Pancreas.</text>
</comment>
<comment type="similarity">
    <text evidence="4">Belongs to the pancreatic ribonuclease family.</text>
</comment>
<accession>P00679</accession>
<reference key="1">
    <citation type="journal article" date="1977" name="Eur. J. Biochem.">
        <title>Guinea-pig pancreatic ribonucleases. Isolation, properties, primary structure and glycosidation.</title>
        <authorList>
            <person name="van den Berg A."/>
            <person name="van den Hende-Timmer L."/>
            <person name="Hofsteenge J."/>
            <person name="Gaastra W."/>
            <person name="Beintema J.J."/>
        </authorList>
    </citation>
    <scope>PROTEIN SEQUENCE</scope>
    <scope>GLYCOSYLATION AT ASN-21 AND ASN-34</scope>
    <source>
        <tissue>Pancreas</tissue>
    </source>
</reference>
<evidence type="ECO:0000250" key="1"/>
<evidence type="ECO:0000256" key="2">
    <source>
        <dbReference type="SAM" id="MobiDB-lite"/>
    </source>
</evidence>
<evidence type="ECO:0000269" key="3">
    <source>
    </source>
</evidence>
<evidence type="ECO:0000305" key="4"/>
<sequence length="128" mass="14406">AESSAMKFQRQHMDPEGSPSNSSNYCNVMMIRRNMTQGRCKPVNTFVHESLADVQAVCFQKNVLCKNGQTNCYQSYSRMRITDCRVTSSSKFPNCSYRMSQAQKSIIVACEGDPYVPVHFDASVEPST</sequence>
<organism>
    <name type="scientific">Cavia porcellus</name>
    <name type="common">Guinea pig</name>
    <dbReference type="NCBI Taxonomy" id="10141"/>
    <lineage>
        <taxon>Eukaryota</taxon>
        <taxon>Metazoa</taxon>
        <taxon>Chordata</taxon>
        <taxon>Craniata</taxon>
        <taxon>Vertebrata</taxon>
        <taxon>Euteleostomi</taxon>
        <taxon>Mammalia</taxon>
        <taxon>Eutheria</taxon>
        <taxon>Euarchontoglires</taxon>
        <taxon>Glires</taxon>
        <taxon>Rodentia</taxon>
        <taxon>Hystricomorpha</taxon>
        <taxon>Caviidae</taxon>
        <taxon>Cavia</taxon>
    </lineage>
</organism>
<name>RNS1B_CAVPO</name>
<feature type="chain" id="PRO_0000057189" description="Ribonuclease pancreatic B">
    <location>
        <begin position="1"/>
        <end position="128"/>
    </location>
</feature>
<feature type="region of interest" description="Disordered" evidence="2">
    <location>
        <begin position="1"/>
        <end position="21"/>
    </location>
</feature>
<feature type="active site" description="Proton acceptor" evidence="1">
    <location>
        <position position="12"/>
    </location>
</feature>
<feature type="active site" description="Proton donor" evidence="1">
    <location>
        <position position="119"/>
    </location>
</feature>
<feature type="binding site" evidence="1">
    <location>
        <position position="7"/>
    </location>
    <ligand>
        <name>substrate</name>
    </ligand>
</feature>
<feature type="binding site" evidence="1">
    <location>
        <position position="10"/>
    </location>
    <ligand>
        <name>substrate</name>
    </ligand>
</feature>
<feature type="binding site" evidence="1">
    <location>
        <begin position="41"/>
        <end position="45"/>
    </location>
    <ligand>
        <name>substrate</name>
    </ligand>
</feature>
<feature type="binding site" evidence="1">
    <location>
        <position position="66"/>
    </location>
    <ligand>
        <name>substrate</name>
    </ligand>
</feature>
<feature type="binding site" evidence="1">
    <location>
        <position position="85"/>
    </location>
    <ligand>
        <name>substrate</name>
    </ligand>
</feature>
<feature type="glycosylation site" description="N-linked (GlcNAc...) asparagine" evidence="3">
    <location>
        <position position="21"/>
    </location>
</feature>
<feature type="glycosylation site" description="N-linked (GlcNAc...) asparagine" evidence="3">
    <location>
        <position position="34"/>
    </location>
</feature>
<feature type="disulfide bond" evidence="1">
    <location>
        <begin position="26"/>
        <end position="84"/>
    </location>
</feature>
<feature type="disulfide bond" evidence="1">
    <location>
        <begin position="40"/>
        <end position="95"/>
    </location>
</feature>
<feature type="disulfide bond" evidence="1">
    <location>
        <begin position="58"/>
        <end position="110"/>
    </location>
</feature>
<feature type="disulfide bond" evidence="1">
    <location>
        <begin position="65"/>
        <end position="72"/>
    </location>
</feature>
<feature type="sequence variant">
    <original>L</original>
    <variation>P</variation>
    <location>
        <position position="64"/>
    </location>
</feature>
<proteinExistence type="evidence at protein level"/>
<dbReference type="EC" id="4.6.1.18"/>
<dbReference type="PIR" id="A00826">
    <property type="entry name" value="NRGPB"/>
</dbReference>
<dbReference type="SMR" id="P00679"/>
<dbReference type="FunCoup" id="P00679">
    <property type="interactions" value="5"/>
</dbReference>
<dbReference type="STRING" id="10141.ENSCPOP00000019991"/>
<dbReference type="iPTMnet" id="P00679"/>
<dbReference type="eggNOG" id="ENOG502SQ4K">
    <property type="taxonomic scope" value="Eukaryota"/>
</dbReference>
<dbReference type="HOGENOM" id="CLU_117006_0_0_1"/>
<dbReference type="InParanoid" id="P00679"/>
<dbReference type="Proteomes" id="UP000005447">
    <property type="component" value="Unassembled WGS sequence"/>
</dbReference>
<dbReference type="GO" id="GO:0005576">
    <property type="term" value="C:extracellular region"/>
    <property type="evidence" value="ECO:0007669"/>
    <property type="project" value="UniProtKB-SubCell"/>
</dbReference>
<dbReference type="GO" id="GO:0016829">
    <property type="term" value="F:lyase activity"/>
    <property type="evidence" value="ECO:0007669"/>
    <property type="project" value="UniProtKB-KW"/>
</dbReference>
<dbReference type="GO" id="GO:0003676">
    <property type="term" value="F:nucleic acid binding"/>
    <property type="evidence" value="ECO:0007669"/>
    <property type="project" value="InterPro"/>
</dbReference>
<dbReference type="GO" id="GO:0004522">
    <property type="term" value="F:ribonuclease A activity"/>
    <property type="evidence" value="ECO:0007669"/>
    <property type="project" value="UniProtKB-EC"/>
</dbReference>
<dbReference type="GO" id="GO:0050830">
    <property type="term" value="P:defense response to Gram-positive bacterium"/>
    <property type="evidence" value="ECO:0007669"/>
    <property type="project" value="TreeGrafter"/>
</dbReference>
<dbReference type="CDD" id="cd06265">
    <property type="entry name" value="RNase_A_canonical"/>
    <property type="match status" value="1"/>
</dbReference>
<dbReference type="FunFam" id="3.10.130.10:FF:000001">
    <property type="entry name" value="Ribonuclease pancreatic"/>
    <property type="match status" value="1"/>
</dbReference>
<dbReference type="Gene3D" id="3.10.130.10">
    <property type="entry name" value="Ribonuclease A-like domain"/>
    <property type="match status" value="1"/>
</dbReference>
<dbReference type="InterPro" id="IPR001427">
    <property type="entry name" value="RNaseA"/>
</dbReference>
<dbReference type="InterPro" id="IPR036816">
    <property type="entry name" value="RNaseA-like_dom_sf"/>
</dbReference>
<dbReference type="InterPro" id="IPR023411">
    <property type="entry name" value="RNaseA_AS"/>
</dbReference>
<dbReference type="InterPro" id="IPR023412">
    <property type="entry name" value="RNaseA_domain"/>
</dbReference>
<dbReference type="PANTHER" id="PTHR11437">
    <property type="entry name" value="RIBONUCLEASE"/>
    <property type="match status" value="1"/>
</dbReference>
<dbReference type="PANTHER" id="PTHR11437:SF24">
    <property type="entry name" value="RIBONUCLEASE PANCREATIC"/>
    <property type="match status" value="1"/>
</dbReference>
<dbReference type="Pfam" id="PF00074">
    <property type="entry name" value="RnaseA"/>
    <property type="match status" value="1"/>
</dbReference>
<dbReference type="PRINTS" id="PR00794">
    <property type="entry name" value="RIBONUCLEASE"/>
</dbReference>
<dbReference type="SMART" id="SM00092">
    <property type="entry name" value="RNAse_Pc"/>
    <property type="match status" value="1"/>
</dbReference>
<dbReference type="SUPFAM" id="SSF54076">
    <property type="entry name" value="RNase A-like"/>
    <property type="match status" value="1"/>
</dbReference>
<dbReference type="PROSITE" id="PS00127">
    <property type="entry name" value="RNASE_PANCREATIC"/>
    <property type="match status" value="1"/>
</dbReference>
<protein>
    <recommendedName>
        <fullName>Ribonuclease pancreatic B</fullName>
        <shortName>RNase IB</shortName>
        <ecNumber>4.6.1.18</ecNumber>
    </recommendedName>
</protein>
<keyword id="KW-0903">Direct protein sequencing</keyword>
<keyword id="KW-1015">Disulfide bond</keyword>
<keyword id="KW-0255">Endonuclease</keyword>
<keyword id="KW-0325">Glycoprotein</keyword>
<keyword id="KW-0378">Hydrolase</keyword>
<keyword id="KW-0456">Lyase</keyword>
<keyword id="KW-0540">Nuclease</keyword>
<keyword id="KW-1185">Reference proteome</keyword>
<keyword id="KW-0964">Secreted</keyword>